<reference key="1">
    <citation type="journal article" date="2003" name="J. Bacteriol.">
        <title>Comparative genomics of Salmonella enterica serovar Typhi strains Ty2 and CT18.</title>
        <authorList>
            <person name="Deng W."/>
            <person name="Liou S.-R."/>
            <person name="Plunkett G. III"/>
            <person name="Mayhew G.F."/>
            <person name="Rose D.J."/>
            <person name="Burland V."/>
            <person name="Kodoyianni V."/>
            <person name="Schwartz D.C."/>
            <person name="Blattner F.R."/>
        </authorList>
    </citation>
    <scope>NUCLEOTIDE SEQUENCE [LARGE SCALE GENOMIC DNA]</scope>
    <source>
        <strain>ATCC 700931 / Ty2</strain>
    </source>
</reference>
<reference key="2">
    <citation type="journal article" date="2001" name="Nature">
        <title>Complete genome sequence of a multiple drug resistant Salmonella enterica serovar Typhi CT18.</title>
        <authorList>
            <person name="Parkhill J."/>
            <person name="Dougan G."/>
            <person name="James K.D."/>
            <person name="Thomson N.R."/>
            <person name="Pickard D."/>
            <person name="Wain J."/>
            <person name="Churcher C.M."/>
            <person name="Mungall K.L."/>
            <person name="Bentley S.D."/>
            <person name="Holden M.T.G."/>
            <person name="Sebaihia M."/>
            <person name="Baker S."/>
            <person name="Basham D."/>
            <person name="Brooks K."/>
            <person name="Chillingworth T."/>
            <person name="Connerton P."/>
            <person name="Cronin A."/>
            <person name="Davis P."/>
            <person name="Davies R.M."/>
            <person name="Dowd L."/>
            <person name="White N."/>
            <person name="Farrar J."/>
            <person name="Feltwell T."/>
            <person name="Hamlin N."/>
            <person name="Haque A."/>
            <person name="Hien T.T."/>
            <person name="Holroyd S."/>
            <person name="Jagels K."/>
            <person name="Krogh A."/>
            <person name="Larsen T.S."/>
            <person name="Leather S."/>
            <person name="Moule S."/>
            <person name="O'Gaora P."/>
            <person name="Parry C."/>
            <person name="Quail M.A."/>
            <person name="Rutherford K.M."/>
            <person name="Simmonds M."/>
            <person name="Skelton J."/>
            <person name="Stevens K."/>
            <person name="Whitehead S."/>
            <person name="Barrell B.G."/>
        </authorList>
    </citation>
    <scope>NUCLEOTIDE SEQUENCE [LARGE SCALE GENOMIC DNA]</scope>
    <source>
        <strain>CT18</strain>
    </source>
</reference>
<gene>
    <name type="primary">ugpB</name>
    <name type="ordered locus">STY4254</name>
    <name type="ordered locus">t3964</name>
</gene>
<dbReference type="EMBL" id="AE014613">
    <property type="protein sequence ID" value="AAO71434.1"/>
    <property type="molecule type" value="Genomic_DNA"/>
</dbReference>
<dbReference type="EMBL" id="AL513382">
    <property type="protein sequence ID" value="CAD08072.1"/>
    <property type="molecule type" value="Genomic_DNA"/>
</dbReference>
<dbReference type="RefSeq" id="NP_458362.1">
    <property type="nucleotide sequence ID" value="NC_003198.1"/>
</dbReference>
<dbReference type="RefSeq" id="WP_000624747.1">
    <property type="nucleotide sequence ID" value="NZ_WSUR01000001.1"/>
</dbReference>
<dbReference type="SMR" id="Q8XG55"/>
<dbReference type="STRING" id="220341.gene:17588085"/>
<dbReference type="KEGG" id="stt:t3964"/>
<dbReference type="KEGG" id="sty:STY4254"/>
<dbReference type="PATRIC" id="fig|220341.7.peg.4345"/>
<dbReference type="eggNOG" id="COG1653">
    <property type="taxonomic scope" value="Bacteria"/>
</dbReference>
<dbReference type="HOGENOM" id="CLU_031285_3_0_6"/>
<dbReference type="OMA" id="EIQWWHS"/>
<dbReference type="OrthoDB" id="4393730at2"/>
<dbReference type="Proteomes" id="UP000000541">
    <property type="component" value="Chromosome"/>
</dbReference>
<dbReference type="Proteomes" id="UP000002670">
    <property type="component" value="Chromosome"/>
</dbReference>
<dbReference type="GO" id="GO:0030288">
    <property type="term" value="C:outer membrane-bounded periplasmic space"/>
    <property type="evidence" value="ECO:0007669"/>
    <property type="project" value="UniProtKB-ARBA"/>
</dbReference>
<dbReference type="GO" id="GO:0055085">
    <property type="term" value="P:transmembrane transport"/>
    <property type="evidence" value="ECO:0007669"/>
    <property type="project" value="InterPro"/>
</dbReference>
<dbReference type="CDD" id="cd14748">
    <property type="entry name" value="PBP2_UgpB"/>
    <property type="match status" value="1"/>
</dbReference>
<dbReference type="Gene3D" id="3.40.190.10">
    <property type="entry name" value="Periplasmic binding protein-like II"/>
    <property type="match status" value="2"/>
</dbReference>
<dbReference type="InterPro" id="IPR050490">
    <property type="entry name" value="Bact_solute-bd_prot1"/>
</dbReference>
<dbReference type="InterPro" id="IPR006059">
    <property type="entry name" value="SBP"/>
</dbReference>
<dbReference type="InterPro" id="IPR006061">
    <property type="entry name" value="SBP_1_CS"/>
</dbReference>
<dbReference type="NCBIfam" id="NF008211">
    <property type="entry name" value="PRK10974.1"/>
    <property type="match status" value="1"/>
</dbReference>
<dbReference type="PANTHER" id="PTHR43649">
    <property type="entry name" value="ARABINOSE-BINDING PROTEIN-RELATED"/>
    <property type="match status" value="1"/>
</dbReference>
<dbReference type="PANTHER" id="PTHR43649:SF31">
    <property type="entry name" value="SN-GLYCEROL-3-PHOSPHATE-BINDING PERIPLASMIC PROTEIN UGPB"/>
    <property type="match status" value="1"/>
</dbReference>
<dbReference type="Pfam" id="PF13416">
    <property type="entry name" value="SBP_bac_8"/>
    <property type="match status" value="1"/>
</dbReference>
<dbReference type="SUPFAM" id="SSF53850">
    <property type="entry name" value="Periplasmic binding protein-like II"/>
    <property type="match status" value="1"/>
</dbReference>
<dbReference type="PROSITE" id="PS01037">
    <property type="entry name" value="SBP_BACTERIAL_1"/>
    <property type="match status" value="1"/>
</dbReference>
<comment type="function">
    <text evidence="1">Part of the ABC transporter complex UgpBAEC involved in sn-glycerol-3-phosphate (G3P) import. Binds G3P.</text>
</comment>
<comment type="subunit">
    <text evidence="1">The complex is composed of two ATP-binding proteins (UgpC), two transmembrane proteins (UgpA and UgpE) and a solute-binding protein (UgpB).</text>
</comment>
<comment type="subcellular location">
    <subcellularLocation>
        <location evidence="1">Periplasm</location>
    </subcellularLocation>
</comment>
<comment type="similarity">
    <text evidence="3">Belongs to the bacterial solute-binding protein 1 family.</text>
</comment>
<protein>
    <recommendedName>
        <fullName evidence="1">sn-glycerol-3-phosphate-binding periplasmic protein UgpB</fullName>
    </recommendedName>
</protein>
<accession>Q8XG55</accession>
<accession>Q7ALV8</accession>
<proteinExistence type="inferred from homology"/>
<name>UGPB_SALTI</name>
<organism>
    <name type="scientific">Salmonella typhi</name>
    <dbReference type="NCBI Taxonomy" id="90370"/>
    <lineage>
        <taxon>Bacteria</taxon>
        <taxon>Pseudomonadati</taxon>
        <taxon>Pseudomonadota</taxon>
        <taxon>Gammaproteobacteria</taxon>
        <taxon>Enterobacterales</taxon>
        <taxon>Enterobacteriaceae</taxon>
        <taxon>Salmonella</taxon>
    </lineage>
</organism>
<evidence type="ECO:0000250" key="1">
    <source>
        <dbReference type="UniProtKB" id="P0AG80"/>
    </source>
</evidence>
<evidence type="ECO:0000255" key="2"/>
<evidence type="ECO:0000305" key="3"/>
<sequence length="438" mass="48393">MISLRHTALGLALSLAFTGQALAVTTIPFWHSMEGELGKEVDSLAQRFNQANPDYKIVPVYKGNYEQNLSAGIAAFRTGNAPAILQVYEVGTATMMASKAIKPVYEVFKDAGINFDESQFVPTVAGYYTDAKSGHLLSQPFNSSTPVLYYNKDAFKKAGLDPEQPPKTWQELADYTAKLRAAGMKCGYASGWQGWIQLENFSAWNGLPFASKNNGFDGTDAVLEFNKPEQVKHIALLEEMNKKGDFSYVGRKDESTEKFYNGDCAMTTASSGSLANIRQYAKFNYGVGMMPYDADIKGAPQNAIIGGASLWVMQGKDKETYTGVAKFLDFLAKPENAAEWHQKTGYLPITTAAYELTREQGYYDKNPGADIATRQMLNKPPLPFTKGLRLGNMPQIRTIVDEELESVWTGKKTPQQALDTAVDRGNQLLRRFEKASKS</sequence>
<keyword id="KW-0574">Periplasm</keyword>
<keyword id="KW-0732">Signal</keyword>
<keyword id="KW-0813">Transport</keyword>
<feature type="signal peptide" evidence="2">
    <location>
        <begin position="1"/>
        <end position="23"/>
    </location>
</feature>
<feature type="chain" id="PRO_0000292815" description="sn-glycerol-3-phosphate-binding periplasmic protein UgpB">
    <location>
        <begin position="24"/>
        <end position="438"/>
    </location>
</feature>
<feature type="binding site" evidence="1">
    <location>
        <position position="65"/>
    </location>
    <ligand>
        <name>sn-glycerol 3-phosphate</name>
        <dbReference type="ChEBI" id="CHEBI:57597"/>
    </ligand>
</feature>
<feature type="binding site" evidence="1">
    <location>
        <position position="89"/>
    </location>
    <ligand>
        <name>sn-glycerol 3-phosphate</name>
        <dbReference type="ChEBI" id="CHEBI:57597"/>
    </ligand>
</feature>
<feature type="binding site" evidence="1">
    <location>
        <position position="144"/>
    </location>
    <ligand>
        <name>sn-glycerol 3-phosphate</name>
        <dbReference type="ChEBI" id="CHEBI:57597"/>
    </ligand>
</feature>
<feature type="binding site" evidence="1">
    <location>
        <position position="270"/>
    </location>
    <ligand>
        <name>sn-glycerol 3-phosphate</name>
        <dbReference type="ChEBI" id="CHEBI:57597"/>
    </ligand>
</feature>
<feature type="binding site" evidence="1">
    <location>
        <position position="307"/>
    </location>
    <ligand>
        <name>sn-glycerol 3-phosphate</name>
        <dbReference type="ChEBI" id="CHEBI:57597"/>
    </ligand>
</feature>
<feature type="binding site" evidence="1">
    <location>
        <position position="346"/>
    </location>
    <ligand>
        <name>sn-glycerol 3-phosphate</name>
        <dbReference type="ChEBI" id="CHEBI:57597"/>
    </ligand>
</feature>
<feature type="binding site" evidence="1">
    <location>
        <position position="397"/>
    </location>
    <ligand>
        <name>sn-glycerol 3-phosphate</name>
        <dbReference type="ChEBI" id="CHEBI:57597"/>
    </ligand>
</feature>